<sequence>MAPQARGLGLCSLLALQASLAAVFITQEEAHSVLRRQRRANSFLEELRPGSLERECKEELCSFEEAREVFQSTERTKQFWITYNDGDQCASNPCQNGGSCEDQIQSYICFCLADFEGRNCEKNKNDQLICMYENGGCEQYCSDHVGSQRSCRCHEGYTLLPNGVSCTPTVDYPCGKVPALEKRGASNPQGRIVGGKVCPKGECPWQAALMNGSTLLCGGSLLDTHWVVSAAHCFDKLSSLRNLTIVLGEHDLSEHEGDEQVRHVAQLIMPDKYVPGKTDHDIALLRLLQPAALTNNVVPLCLPERNFSESTLATIRFSRVSGWGQLLYRGALARELMAIDVPRLMTQDCVEQSEHKPGSPEVTGNMFCAGYLDGSKDACKGDSGGPHATSYHGTWYLTGVVSWGEGCAAVGHVGVYTRVSRYTEWLSRLMRSKLHHGIQRHPFP</sequence>
<protein>
    <recommendedName>
        <fullName>Coagulation factor VII</fullName>
        <ecNumber>3.4.21.21</ecNumber>
    </recommendedName>
    <alternativeName>
        <fullName>Serum prothrombin conversion accelerator</fullName>
    </alternativeName>
    <component>
        <recommendedName>
            <fullName>Factor VII light chain</fullName>
        </recommendedName>
    </component>
    <component>
        <recommendedName>
            <fullName>Factor VII heavy chain</fullName>
        </recommendedName>
    </component>
</protein>
<proteinExistence type="evidence at transcript level"/>
<evidence type="ECO:0000250" key="1"/>
<evidence type="ECO:0000250" key="2">
    <source>
        <dbReference type="UniProtKB" id="P08709"/>
    </source>
</evidence>
<evidence type="ECO:0000250" key="3">
    <source>
        <dbReference type="UniProtKB" id="P22457"/>
    </source>
</evidence>
<evidence type="ECO:0000255" key="4"/>
<evidence type="ECO:0000255" key="5">
    <source>
        <dbReference type="PROSITE-ProRule" id="PRU00076"/>
    </source>
</evidence>
<evidence type="ECO:0000255" key="6">
    <source>
        <dbReference type="PROSITE-ProRule" id="PRU00274"/>
    </source>
</evidence>
<evidence type="ECO:0000255" key="7">
    <source>
        <dbReference type="PROSITE-ProRule" id="PRU00463"/>
    </source>
</evidence>
<name>FA7_RABIT</name>
<dbReference type="EC" id="3.4.21.21"/>
<dbReference type="EMBL" id="U77477">
    <property type="protein sequence ID" value="AAB37326.1"/>
    <property type="molecule type" value="mRNA"/>
</dbReference>
<dbReference type="PIR" id="I46932">
    <property type="entry name" value="I46932"/>
</dbReference>
<dbReference type="RefSeq" id="NP_001076148.1">
    <property type="nucleotide sequence ID" value="NM_001082679.1"/>
</dbReference>
<dbReference type="SMR" id="P98139"/>
<dbReference type="FunCoup" id="P98139">
    <property type="interactions" value="22"/>
</dbReference>
<dbReference type="STRING" id="9986.ENSOCUP00000042756"/>
<dbReference type="BindingDB" id="P98139"/>
<dbReference type="ChEMBL" id="CHEMBL3351187"/>
<dbReference type="GlyCosmos" id="P98139">
    <property type="glycosylation" value="5 sites, No reported glycans"/>
</dbReference>
<dbReference type="PaxDb" id="9986-ENSOCUP00000024648"/>
<dbReference type="GeneID" id="100009399"/>
<dbReference type="KEGG" id="ocu:100009399"/>
<dbReference type="CTD" id="2155"/>
<dbReference type="eggNOG" id="ENOG502QRGI">
    <property type="taxonomic scope" value="Eukaryota"/>
</dbReference>
<dbReference type="InParanoid" id="P98139"/>
<dbReference type="OrthoDB" id="10004439at2759"/>
<dbReference type="Proteomes" id="UP000001811">
    <property type="component" value="Unplaced"/>
</dbReference>
<dbReference type="GO" id="GO:0005615">
    <property type="term" value="C:extracellular space"/>
    <property type="evidence" value="ECO:0007669"/>
    <property type="project" value="TreeGrafter"/>
</dbReference>
<dbReference type="GO" id="GO:0005509">
    <property type="term" value="F:calcium ion binding"/>
    <property type="evidence" value="ECO:0007669"/>
    <property type="project" value="InterPro"/>
</dbReference>
<dbReference type="GO" id="GO:0004252">
    <property type="term" value="F:serine-type endopeptidase activity"/>
    <property type="evidence" value="ECO:0007669"/>
    <property type="project" value="UniProtKB-EC"/>
</dbReference>
<dbReference type="GO" id="GO:0007596">
    <property type="term" value="P:blood coagulation"/>
    <property type="evidence" value="ECO:0007669"/>
    <property type="project" value="UniProtKB-KW"/>
</dbReference>
<dbReference type="GO" id="GO:0006508">
    <property type="term" value="P:proteolysis"/>
    <property type="evidence" value="ECO:0007669"/>
    <property type="project" value="UniProtKB-KW"/>
</dbReference>
<dbReference type="CDD" id="cd00054">
    <property type="entry name" value="EGF_CA"/>
    <property type="match status" value="1"/>
</dbReference>
<dbReference type="CDD" id="cd00190">
    <property type="entry name" value="Tryp_SPc"/>
    <property type="match status" value="1"/>
</dbReference>
<dbReference type="FunFam" id="2.10.25.10:FF:000259">
    <property type="entry name" value="Coagulation factor VII"/>
    <property type="match status" value="1"/>
</dbReference>
<dbReference type="FunFam" id="2.10.25.10:FF:000420">
    <property type="entry name" value="Coagulation factor VII"/>
    <property type="match status" value="1"/>
</dbReference>
<dbReference type="FunFam" id="2.40.10.10:FF:000013">
    <property type="entry name" value="Coagulation factor X"/>
    <property type="match status" value="1"/>
</dbReference>
<dbReference type="FunFam" id="4.10.740.10:FF:000001">
    <property type="entry name" value="vitamin K-dependent protein S"/>
    <property type="match status" value="1"/>
</dbReference>
<dbReference type="Gene3D" id="4.10.740.10">
    <property type="entry name" value="Coagulation Factor IX"/>
    <property type="match status" value="1"/>
</dbReference>
<dbReference type="Gene3D" id="2.10.25.10">
    <property type="entry name" value="Laminin"/>
    <property type="match status" value="2"/>
</dbReference>
<dbReference type="Gene3D" id="2.40.10.10">
    <property type="entry name" value="Trypsin-like serine proteases"/>
    <property type="match status" value="2"/>
</dbReference>
<dbReference type="InterPro" id="IPR017857">
    <property type="entry name" value="Coagulation_fac-like_Gla_dom"/>
</dbReference>
<dbReference type="InterPro" id="IPR001881">
    <property type="entry name" value="EGF-like_Ca-bd_dom"/>
</dbReference>
<dbReference type="InterPro" id="IPR000742">
    <property type="entry name" value="EGF-like_dom"/>
</dbReference>
<dbReference type="InterPro" id="IPR000152">
    <property type="entry name" value="EGF-type_Asp/Asn_hydroxyl_site"/>
</dbReference>
<dbReference type="InterPro" id="IPR018097">
    <property type="entry name" value="EGF_Ca-bd_CS"/>
</dbReference>
<dbReference type="InterPro" id="IPR035972">
    <property type="entry name" value="GLA-like_dom_SF"/>
</dbReference>
<dbReference type="InterPro" id="IPR000294">
    <property type="entry name" value="GLA_domain"/>
</dbReference>
<dbReference type="InterPro" id="IPR012224">
    <property type="entry name" value="Pept_S1A_FX"/>
</dbReference>
<dbReference type="InterPro" id="IPR050442">
    <property type="entry name" value="Peptidase_S1_coag_factors"/>
</dbReference>
<dbReference type="InterPro" id="IPR009003">
    <property type="entry name" value="Peptidase_S1_PA"/>
</dbReference>
<dbReference type="InterPro" id="IPR043504">
    <property type="entry name" value="Peptidase_S1_PA_chymotrypsin"/>
</dbReference>
<dbReference type="InterPro" id="IPR001314">
    <property type="entry name" value="Peptidase_S1A"/>
</dbReference>
<dbReference type="InterPro" id="IPR001254">
    <property type="entry name" value="Trypsin_dom"/>
</dbReference>
<dbReference type="InterPro" id="IPR018114">
    <property type="entry name" value="TRYPSIN_HIS"/>
</dbReference>
<dbReference type="InterPro" id="IPR033116">
    <property type="entry name" value="TRYPSIN_SER"/>
</dbReference>
<dbReference type="PANTHER" id="PTHR24278">
    <property type="entry name" value="COAGULATION FACTOR"/>
    <property type="match status" value="1"/>
</dbReference>
<dbReference type="PANTHER" id="PTHR24278:SF26">
    <property type="entry name" value="COAGULATION FACTOR VII"/>
    <property type="match status" value="1"/>
</dbReference>
<dbReference type="Pfam" id="PF00008">
    <property type="entry name" value="EGF"/>
    <property type="match status" value="1"/>
</dbReference>
<dbReference type="Pfam" id="PF14670">
    <property type="entry name" value="FXa_inhibition"/>
    <property type="match status" value="1"/>
</dbReference>
<dbReference type="Pfam" id="PF00594">
    <property type="entry name" value="Gla"/>
    <property type="match status" value="1"/>
</dbReference>
<dbReference type="Pfam" id="PF00089">
    <property type="entry name" value="Trypsin"/>
    <property type="match status" value="1"/>
</dbReference>
<dbReference type="PIRSF" id="PIRSF001143">
    <property type="entry name" value="Factor_X"/>
    <property type="match status" value="1"/>
</dbReference>
<dbReference type="PRINTS" id="PR00722">
    <property type="entry name" value="CHYMOTRYPSIN"/>
</dbReference>
<dbReference type="PRINTS" id="PR00010">
    <property type="entry name" value="EGFBLOOD"/>
</dbReference>
<dbReference type="PRINTS" id="PR00001">
    <property type="entry name" value="GLABLOOD"/>
</dbReference>
<dbReference type="SMART" id="SM00181">
    <property type="entry name" value="EGF"/>
    <property type="match status" value="2"/>
</dbReference>
<dbReference type="SMART" id="SM00179">
    <property type="entry name" value="EGF_CA"/>
    <property type="match status" value="1"/>
</dbReference>
<dbReference type="SMART" id="SM00069">
    <property type="entry name" value="GLA"/>
    <property type="match status" value="1"/>
</dbReference>
<dbReference type="SMART" id="SM00020">
    <property type="entry name" value="Tryp_SPc"/>
    <property type="match status" value="1"/>
</dbReference>
<dbReference type="SUPFAM" id="SSF57196">
    <property type="entry name" value="EGF/Laminin"/>
    <property type="match status" value="1"/>
</dbReference>
<dbReference type="SUPFAM" id="SSF57630">
    <property type="entry name" value="GLA-domain"/>
    <property type="match status" value="1"/>
</dbReference>
<dbReference type="SUPFAM" id="SSF50494">
    <property type="entry name" value="Trypsin-like serine proteases"/>
    <property type="match status" value="1"/>
</dbReference>
<dbReference type="PROSITE" id="PS00010">
    <property type="entry name" value="ASX_HYDROXYL"/>
    <property type="match status" value="1"/>
</dbReference>
<dbReference type="PROSITE" id="PS00022">
    <property type="entry name" value="EGF_1"/>
    <property type="match status" value="1"/>
</dbReference>
<dbReference type="PROSITE" id="PS01186">
    <property type="entry name" value="EGF_2"/>
    <property type="match status" value="1"/>
</dbReference>
<dbReference type="PROSITE" id="PS50026">
    <property type="entry name" value="EGF_3"/>
    <property type="match status" value="1"/>
</dbReference>
<dbReference type="PROSITE" id="PS01187">
    <property type="entry name" value="EGF_CA"/>
    <property type="match status" value="1"/>
</dbReference>
<dbReference type="PROSITE" id="PS00011">
    <property type="entry name" value="GLA_1"/>
    <property type="match status" value="1"/>
</dbReference>
<dbReference type="PROSITE" id="PS50998">
    <property type="entry name" value="GLA_2"/>
    <property type="match status" value="1"/>
</dbReference>
<dbReference type="PROSITE" id="PS50240">
    <property type="entry name" value="TRYPSIN_DOM"/>
    <property type="match status" value="1"/>
</dbReference>
<dbReference type="PROSITE" id="PS00134">
    <property type="entry name" value="TRYPSIN_HIS"/>
    <property type="match status" value="1"/>
</dbReference>
<dbReference type="PROSITE" id="PS00135">
    <property type="entry name" value="TRYPSIN_SER"/>
    <property type="match status" value="1"/>
</dbReference>
<organism>
    <name type="scientific">Oryctolagus cuniculus</name>
    <name type="common">Rabbit</name>
    <dbReference type="NCBI Taxonomy" id="9986"/>
    <lineage>
        <taxon>Eukaryota</taxon>
        <taxon>Metazoa</taxon>
        <taxon>Chordata</taxon>
        <taxon>Craniata</taxon>
        <taxon>Vertebrata</taxon>
        <taxon>Euteleostomi</taxon>
        <taxon>Mammalia</taxon>
        <taxon>Eutheria</taxon>
        <taxon>Euarchontoglires</taxon>
        <taxon>Glires</taxon>
        <taxon>Lagomorpha</taxon>
        <taxon>Leporidae</taxon>
        <taxon>Oryctolagus</taxon>
    </lineage>
</organism>
<accession>P98139</accession>
<accession>P79224</accession>
<keyword id="KW-0094">Blood coagulation</keyword>
<keyword id="KW-0106">Calcium</keyword>
<keyword id="KW-0165">Cleavage on pair of basic residues</keyword>
<keyword id="KW-1015">Disulfide bond</keyword>
<keyword id="KW-0245">EGF-like domain</keyword>
<keyword id="KW-0301">Gamma-carboxyglutamic acid</keyword>
<keyword id="KW-0325">Glycoprotein</keyword>
<keyword id="KW-0356">Hemostasis</keyword>
<keyword id="KW-0378">Hydrolase</keyword>
<keyword id="KW-0379">Hydroxylation</keyword>
<keyword id="KW-0645">Protease</keyword>
<keyword id="KW-1185">Reference proteome</keyword>
<keyword id="KW-0677">Repeat</keyword>
<keyword id="KW-0964">Secreted</keyword>
<keyword id="KW-0720">Serine protease</keyword>
<keyword id="KW-0732">Signal</keyword>
<keyword id="KW-0865">Zymogen</keyword>
<reference key="1">
    <citation type="journal article" date="1993" name="Thromb. Res. Suppl.">
        <title>Complete nucleotide sequence of the cDNA encoding rabbit coagulation factor VII.</title>
        <authorList>
            <person name="Brothers A.B."/>
            <person name="Clarke B.J."/>
            <person name="Sheffield W.P."/>
            <person name="Blajchman M.A."/>
        </authorList>
    </citation>
    <scope>NUCLEOTIDE SEQUENCE [MRNA]</scope>
    <source>
        <tissue>Liver</tissue>
    </source>
</reference>
<reference key="2">
    <citation type="submission" date="1996-11" db="EMBL/GenBank/DDBJ databases">
        <authorList>
            <person name="Ruiz S.R."/>
            <person name="Blajchman M.A."/>
            <person name="Clarke B.J."/>
        </authorList>
    </citation>
    <scope>SEQUENCE REVISION TO 395</scope>
    <source>
        <tissue>Liver</tissue>
    </source>
</reference>
<comment type="function">
    <text evidence="1">Initiates the extrinsic pathway of blood coagulation. Serine protease that circulates in the blood in a zymogen form. Factor VII is converted to factor VIIa by factor Xa, factor XIIa, factor IXa, or thrombin by minor proteolysis. In the presence of tissue factor and calcium ions, factor VIIa then converts factor X to factor Xa by limited proteolysis. Factor VIIa also converts factor IX to factor IXa in the presence of tissue factor and calcium (By similarity).</text>
</comment>
<comment type="catalytic activity">
    <reaction>
        <text>Selective cleavage of Arg-|-Ile bond in factor X to form factor Xa.</text>
        <dbReference type="EC" id="3.4.21.21"/>
    </reaction>
</comment>
<comment type="subunit">
    <text evidence="1">Heterodimer of a light chain and a heavy chain linked by a disulfide bond.</text>
</comment>
<comment type="subcellular location">
    <subcellularLocation>
        <location evidence="1">Secreted</location>
    </subcellularLocation>
</comment>
<comment type="tissue specificity">
    <text>Plasma.</text>
</comment>
<comment type="PTM">
    <text evidence="1">The vitamin K-dependent, enzymatic carboxylation of some glutamate residues allows the modified protein to bind calcium.</text>
</comment>
<comment type="PTM">
    <text evidence="1">The iron and 2-oxoglutarate dependent 3-hydroxylation of aspartate and asparagine is (R) stereospecific within EGF domains.</text>
</comment>
<comment type="PTM">
    <text evidence="1">O-glycosylated. O-fucosylated by POFUT1 on a conserved serine or threonine residue found in the consensus sequence C2-X(4,5)-[S/T]-C3 of EGF domains, where C2 and C3 are the second and third conserved cysteines.</text>
</comment>
<comment type="PTM">
    <text evidence="1">Can be either O-glucosylated or O-xylosylated at Ser-91 by POGLUT1.</text>
</comment>
<comment type="similarity">
    <text evidence="6">Belongs to the peptidase S1 family.</text>
</comment>
<feature type="signal peptide" evidence="4">
    <location>
        <begin position="1"/>
        <end position="21"/>
    </location>
</feature>
<feature type="propeptide" id="PRO_0000027735" evidence="4">
    <location>
        <begin position="22"/>
        <end position="39"/>
    </location>
</feature>
<feature type="chain" id="PRO_0000027736" description="Factor VII light chain">
    <location>
        <begin position="40"/>
        <end position="191"/>
    </location>
</feature>
<feature type="chain" id="PRO_0000027737" description="Factor VII heavy chain">
    <location>
        <begin position="192"/>
        <end position="444"/>
    </location>
</feature>
<feature type="domain" description="Gla" evidence="7">
    <location>
        <begin position="40"/>
        <end position="84"/>
    </location>
</feature>
<feature type="domain" description="EGF-like 1; calcium-binding" evidence="5">
    <location>
        <begin position="85"/>
        <end position="121"/>
    </location>
</feature>
<feature type="domain" description="EGF-like 2" evidence="5">
    <location>
        <begin position="126"/>
        <end position="167"/>
    </location>
</feature>
<feature type="domain" description="Peptidase S1" evidence="6">
    <location>
        <begin position="192"/>
        <end position="431"/>
    </location>
</feature>
<feature type="active site" description="Charge relay system" evidence="1">
    <location>
        <position position="232"/>
    </location>
</feature>
<feature type="active site" description="Charge relay system" evidence="1">
    <location>
        <position position="281"/>
    </location>
</feature>
<feature type="active site" description="Charge relay system" evidence="1">
    <location>
        <position position="383"/>
    </location>
</feature>
<feature type="binding site" evidence="1">
    <location>
        <position position="377"/>
    </location>
    <ligand>
        <name>substrate</name>
    </ligand>
</feature>
<feature type="site" description="Cleavage; by factor Xa, factor XIIa, factor IXa, or thrombin" evidence="1">
    <location>
        <begin position="191"/>
        <end position="192"/>
    </location>
</feature>
<feature type="modified residue" description="4-carboxyglutamate" evidence="3 7">
    <location>
        <position position="45"/>
    </location>
</feature>
<feature type="modified residue" description="4-carboxyglutamate" evidence="3 7">
    <location>
        <position position="46"/>
    </location>
</feature>
<feature type="modified residue" description="4-carboxyglutamate" evidence="3 7">
    <location>
        <position position="53"/>
    </location>
</feature>
<feature type="modified residue" description="4-carboxyglutamate" evidence="3 7">
    <location>
        <position position="55"/>
    </location>
</feature>
<feature type="modified residue" description="4-carboxyglutamate" evidence="3 7">
    <location>
        <position position="58"/>
    </location>
</feature>
<feature type="modified residue" description="4-carboxyglutamate" evidence="3 7">
    <location>
        <position position="59"/>
    </location>
</feature>
<feature type="modified residue" description="4-carboxyglutamate" evidence="3 7">
    <location>
        <position position="64"/>
    </location>
</feature>
<feature type="modified residue" description="4-carboxyglutamate" evidence="3 7">
    <location>
        <position position="65"/>
    </location>
</feature>
<feature type="modified residue" description="4-carboxyglutamate" evidence="3 7">
    <location>
        <position position="68"/>
    </location>
</feature>
<feature type="modified residue" description="4-carboxyglutamate" evidence="3 7">
    <location>
        <position position="74"/>
    </location>
</feature>
<feature type="modified residue" description="(3R)-3-hydroxyaspartate" evidence="1">
    <location>
        <position position="102"/>
    </location>
</feature>
<feature type="glycosylation site" description="O-linked (Glc...) serine; alternate" evidence="2">
    <location>
        <position position="91"/>
    </location>
</feature>
<feature type="glycosylation site" description="O-linked (Xyl...) serine; alternate" evidence="2">
    <location>
        <position position="91"/>
    </location>
</feature>
<feature type="glycosylation site" description="O-linked (Fuc) serine" evidence="1">
    <location>
        <position position="99"/>
    </location>
</feature>
<feature type="glycosylation site" description="N-linked (GlcNAc...) asparagine" evidence="4">
    <location>
        <position position="211"/>
    </location>
</feature>
<feature type="glycosylation site" description="N-linked (GlcNAc...) asparagine" evidence="4">
    <location>
        <position position="242"/>
    </location>
</feature>
<feature type="glycosylation site" description="N-linked (GlcNAc...) asparagine" evidence="4">
    <location>
        <position position="306"/>
    </location>
</feature>
<feature type="disulfide bond" evidence="1">
    <location>
        <begin position="56"/>
        <end position="61"/>
    </location>
</feature>
<feature type="disulfide bond" evidence="1">
    <location>
        <begin position="89"/>
        <end position="100"/>
    </location>
</feature>
<feature type="disulfide bond" evidence="1">
    <location>
        <begin position="94"/>
        <end position="109"/>
    </location>
</feature>
<feature type="disulfide bond" evidence="1">
    <location>
        <begin position="111"/>
        <end position="120"/>
    </location>
</feature>
<feature type="disulfide bond" evidence="1">
    <location>
        <begin position="130"/>
        <end position="141"/>
    </location>
</feature>
<feature type="disulfide bond" evidence="1">
    <location>
        <begin position="137"/>
        <end position="151"/>
    </location>
</feature>
<feature type="disulfide bond" evidence="1">
    <location>
        <begin position="153"/>
        <end position="166"/>
    </location>
</feature>
<feature type="disulfide bond" evidence="1">
    <location>
        <begin position="174"/>
        <end position="301"/>
    </location>
</feature>
<feature type="disulfide bond" evidence="1">
    <location>
        <begin position="198"/>
        <end position="203"/>
    </location>
</feature>
<feature type="disulfide bond" evidence="1">
    <location>
        <begin position="217"/>
        <end position="233"/>
    </location>
</feature>
<feature type="disulfide bond" evidence="1">
    <location>
        <begin position="349"/>
        <end position="368"/>
    </location>
</feature>
<feature type="disulfide bond" evidence="1">
    <location>
        <begin position="379"/>
        <end position="407"/>
    </location>
</feature>
<gene>
    <name type="primary">F7</name>
</gene>